<evidence type="ECO:0000256" key="1">
    <source>
        <dbReference type="SAM" id="MobiDB-lite"/>
    </source>
</evidence>
<evidence type="ECO:0000269" key="2">
    <source>
    </source>
</evidence>
<evidence type="ECO:0000303" key="3">
    <source>
    </source>
</evidence>
<evidence type="ECO:0000305" key="4"/>
<evidence type="ECO:0000305" key="5">
    <source>
    </source>
</evidence>
<evidence type="ECO:0007744" key="6">
    <source>
        <dbReference type="PDB" id="7R81"/>
    </source>
</evidence>
<organism>
    <name type="scientific">Neurospora crassa (strain ATCC 24698 / 74-OR23-1A / CBS 708.71 / DSM 1257 / FGSC 987)</name>
    <dbReference type="NCBI Taxonomy" id="367110"/>
    <lineage>
        <taxon>Eukaryota</taxon>
        <taxon>Fungi</taxon>
        <taxon>Dikarya</taxon>
        <taxon>Ascomycota</taxon>
        <taxon>Pezizomycotina</taxon>
        <taxon>Sordariomycetes</taxon>
        <taxon>Sordariomycetidae</taxon>
        <taxon>Sordariales</taxon>
        <taxon>Sordariaceae</taxon>
        <taxon>Neurospora</taxon>
    </lineage>
</organism>
<protein>
    <recommendedName>
        <fullName evidence="3">Large ribosomal subunit protein uL30</fullName>
    </recommendedName>
    <alternativeName>
        <fullName>60S ribosomal protein L7</fullName>
    </alternativeName>
</protein>
<keyword id="KW-0002">3D-structure</keyword>
<keyword id="KW-0963">Cytoplasm</keyword>
<keyword id="KW-1185">Reference proteome</keyword>
<keyword id="KW-0687">Ribonucleoprotein</keyword>
<keyword id="KW-0689">Ribosomal protein</keyword>
<proteinExistence type="evidence at protein level"/>
<comment type="function">
    <text evidence="5">Component of the ribosome, a large ribonucleoprotein complex responsible for the synthesis of proteins in the cell. The small ribosomal subunit (SSU) binds messenger RNAs (mRNAs) and translates the encoded message by selecting cognate aminoacyl-transfer RNA (tRNA) molecules. The large subunit (LSU) contains the ribosomal catalytic site termed the peptidyl transferase center (PTC), which catalyzes the formation of peptide bonds, thereby polymerizing the amino acids delivered by tRNAs into a polypeptide chain. The nascent polypeptides leave the ribosome through a tunnel in the LSU and interact with protein factors that function in enzymatic processing, targeting, and the membrane insertion of nascent chains at the exit of the ribosomal tunnel.</text>
</comment>
<comment type="subunit">
    <text evidence="2">Component of the large ribosomal subunit (LSU). Mature N.crassa ribosomes consist of a small (40S) and a large (60S) subunit. The 40S small subunit contains 1 molecule of ribosomal RNA (18S rRNA) and at least 32 different proteins. The large 60S subunit contains 3 rRNA molecules (26S, 5.8S and 5S rRNA) and at least 42 different proteins.</text>
</comment>
<comment type="subcellular location">
    <subcellularLocation>
        <location evidence="2">Cytoplasm</location>
    </subcellularLocation>
</comment>
<comment type="similarity">
    <text evidence="4">Belongs to the universal ribosomal protein uL30 family.</text>
</comment>
<dbReference type="EMBL" id="CM002238">
    <property type="protein sequence ID" value="EAA33714.2"/>
    <property type="molecule type" value="Genomic_DNA"/>
</dbReference>
<dbReference type="RefSeq" id="XP_962950.2">
    <property type="nucleotide sequence ID" value="XM_957857.3"/>
</dbReference>
<dbReference type="PDB" id="7R81">
    <property type="method" value="EM"/>
    <property type="resolution" value="2.70 A"/>
    <property type="chains" value="I1=1-248"/>
</dbReference>
<dbReference type="PDBsum" id="7R81"/>
<dbReference type="EMDB" id="EMD-24307"/>
<dbReference type="SMR" id="Q7SBD5"/>
<dbReference type="FunCoup" id="Q7SBD5">
    <property type="interactions" value="1242"/>
</dbReference>
<dbReference type="STRING" id="367110.Q7SBD5"/>
<dbReference type="PaxDb" id="5141-EFNCRP00000007490"/>
<dbReference type="EnsemblFungi" id="EAA33714">
    <property type="protein sequence ID" value="EAA33714"/>
    <property type="gene ID" value="NCU07829"/>
</dbReference>
<dbReference type="GeneID" id="3879098"/>
<dbReference type="KEGG" id="ncr:NCU07829"/>
<dbReference type="VEuPathDB" id="FungiDB:NCU07829"/>
<dbReference type="HOGENOM" id="CLU_055156_0_2_1"/>
<dbReference type="InParanoid" id="Q7SBD5"/>
<dbReference type="OMA" id="IVEPWIA"/>
<dbReference type="OrthoDB" id="28644at2759"/>
<dbReference type="Proteomes" id="UP000001805">
    <property type="component" value="Chromosome 3, Linkage Group III"/>
</dbReference>
<dbReference type="GO" id="GO:0022625">
    <property type="term" value="C:cytosolic large ribosomal subunit"/>
    <property type="evidence" value="ECO:0000318"/>
    <property type="project" value="GO_Central"/>
</dbReference>
<dbReference type="GO" id="GO:0003723">
    <property type="term" value="F:RNA binding"/>
    <property type="evidence" value="ECO:0000318"/>
    <property type="project" value="GO_Central"/>
</dbReference>
<dbReference type="GO" id="GO:0003735">
    <property type="term" value="F:structural constituent of ribosome"/>
    <property type="evidence" value="ECO:0000318"/>
    <property type="project" value="GO_Central"/>
</dbReference>
<dbReference type="GO" id="GO:0000463">
    <property type="term" value="P:maturation of LSU-rRNA from tricistronic rRNA transcript (SSU-rRNA, 5.8S rRNA, LSU-rRNA)"/>
    <property type="evidence" value="ECO:0000318"/>
    <property type="project" value="GO_Central"/>
</dbReference>
<dbReference type="CDD" id="cd01657">
    <property type="entry name" value="Ribosomal_L7_archeal_euk"/>
    <property type="match status" value="1"/>
</dbReference>
<dbReference type="FunFam" id="3.30.1390.20:FF:000002">
    <property type="entry name" value="60S ribosomal protein L7"/>
    <property type="match status" value="1"/>
</dbReference>
<dbReference type="FunFam" id="3.30.1390.20:FF:000003">
    <property type="entry name" value="60S ribosomal protein L7"/>
    <property type="match status" value="1"/>
</dbReference>
<dbReference type="Gene3D" id="3.30.1390.20">
    <property type="entry name" value="Ribosomal protein L30, ferredoxin-like fold domain"/>
    <property type="match status" value="2"/>
</dbReference>
<dbReference type="InterPro" id="IPR036919">
    <property type="entry name" value="Ribo_uL30_ferredoxin-like_sf"/>
</dbReference>
<dbReference type="InterPro" id="IPR039699">
    <property type="entry name" value="Ribosomal_uL30"/>
</dbReference>
<dbReference type="InterPro" id="IPR005998">
    <property type="entry name" value="Ribosomal_uL30_euk"/>
</dbReference>
<dbReference type="InterPro" id="IPR035808">
    <property type="entry name" value="Ribosomal_uL30_euk_arc"/>
</dbReference>
<dbReference type="InterPro" id="IPR016082">
    <property type="entry name" value="Ribosomal_uL30_ferredoxin-like"/>
</dbReference>
<dbReference type="InterPro" id="IPR012988">
    <property type="entry name" value="Ribosomal_uL30_N_euk"/>
</dbReference>
<dbReference type="NCBIfam" id="TIGR01310">
    <property type="entry name" value="uL30_euk"/>
    <property type="match status" value="1"/>
</dbReference>
<dbReference type="PANTHER" id="PTHR11524">
    <property type="entry name" value="60S RIBOSOMAL PROTEIN L7"/>
    <property type="match status" value="1"/>
</dbReference>
<dbReference type="PANTHER" id="PTHR11524:SF16">
    <property type="entry name" value="LARGE RIBOSOMAL SUBUNIT PROTEIN UL30"/>
    <property type="match status" value="1"/>
</dbReference>
<dbReference type="Pfam" id="PF00327">
    <property type="entry name" value="Ribosomal_L30"/>
    <property type="match status" value="1"/>
</dbReference>
<dbReference type="Pfam" id="PF08079">
    <property type="entry name" value="Ribosomal_L30_N"/>
    <property type="match status" value="1"/>
</dbReference>
<dbReference type="SUPFAM" id="SSF55129">
    <property type="entry name" value="Ribosomal protein L30p/L7e"/>
    <property type="match status" value="1"/>
</dbReference>
<gene>
    <name type="primary">rpl-7</name>
    <name type="ORF">NCU07829</name>
</gene>
<name>RL7_NEUCR</name>
<accession>Q7SBD5</accession>
<sequence>MSTSVPTKNDVLVPETLLKKRKSQEKARAERQAEIEKKKAANKEKRAVIFKRAETYVKEYRDVEREKIRLQRAAKQDGSFHIPAEAKLIFLIRIKGINKIPPKPRKILQLLRLLQINNGVFVRVTKATAEMIKIVEPWVAYGYPNLKSVKELIYKRGYGKVNKQRVALTDNSIIEENLGKYGIICMEDLIHEIYTVGPNFKQASNFLWPFKLSNPTGGFRTRKFKHFIEGGDLGNREEHINALIRQMN</sequence>
<feature type="chain" id="PRO_0000104646" description="Large ribosomal subunit protein uL30">
    <location>
        <begin position="1"/>
        <end position="248"/>
    </location>
</feature>
<feature type="region of interest" description="Disordered" evidence="1">
    <location>
        <begin position="22"/>
        <end position="42"/>
    </location>
</feature>
<feature type="compositionally biased region" description="Basic and acidic residues" evidence="1">
    <location>
        <begin position="24"/>
        <end position="42"/>
    </location>
</feature>
<reference key="1">
    <citation type="journal article" date="2003" name="Nature">
        <title>The genome sequence of the filamentous fungus Neurospora crassa.</title>
        <authorList>
            <person name="Galagan J.E."/>
            <person name="Calvo S.E."/>
            <person name="Borkovich K.A."/>
            <person name="Selker E.U."/>
            <person name="Read N.D."/>
            <person name="Jaffe D.B."/>
            <person name="FitzHugh W."/>
            <person name="Ma L.-J."/>
            <person name="Smirnov S."/>
            <person name="Purcell S."/>
            <person name="Rehman B."/>
            <person name="Elkins T."/>
            <person name="Engels R."/>
            <person name="Wang S."/>
            <person name="Nielsen C.B."/>
            <person name="Butler J."/>
            <person name="Endrizzi M."/>
            <person name="Qui D."/>
            <person name="Ianakiev P."/>
            <person name="Bell-Pedersen D."/>
            <person name="Nelson M.A."/>
            <person name="Werner-Washburne M."/>
            <person name="Selitrennikoff C.P."/>
            <person name="Kinsey J.A."/>
            <person name="Braun E.L."/>
            <person name="Zelter A."/>
            <person name="Schulte U."/>
            <person name="Kothe G.O."/>
            <person name="Jedd G."/>
            <person name="Mewes H.-W."/>
            <person name="Staben C."/>
            <person name="Marcotte E."/>
            <person name="Greenberg D."/>
            <person name="Roy A."/>
            <person name="Foley K."/>
            <person name="Naylor J."/>
            <person name="Stange-Thomann N."/>
            <person name="Barrett R."/>
            <person name="Gnerre S."/>
            <person name="Kamal M."/>
            <person name="Kamvysselis M."/>
            <person name="Mauceli E.W."/>
            <person name="Bielke C."/>
            <person name="Rudd S."/>
            <person name="Frishman D."/>
            <person name="Krystofova S."/>
            <person name="Rasmussen C."/>
            <person name="Metzenberg R.L."/>
            <person name="Perkins D.D."/>
            <person name="Kroken S."/>
            <person name="Cogoni C."/>
            <person name="Macino G."/>
            <person name="Catcheside D.E.A."/>
            <person name="Li W."/>
            <person name="Pratt R.J."/>
            <person name="Osmani S.A."/>
            <person name="DeSouza C.P.C."/>
            <person name="Glass N.L."/>
            <person name="Orbach M.J."/>
            <person name="Berglund J.A."/>
            <person name="Voelker R."/>
            <person name="Yarden O."/>
            <person name="Plamann M."/>
            <person name="Seiler S."/>
            <person name="Dunlap J.C."/>
            <person name="Radford A."/>
            <person name="Aramayo R."/>
            <person name="Natvig D.O."/>
            <person name="Alex L.A."/>
            <person name="Mannhaupt G."/>
            <person name="Ebbole D.J."/>
            <person name="Freitag M."/>
            <person name="Paulsen I."/>
            <person name="Sachs M.S."/>
            <person name="Lander E.S."/>
            <person name="Nusbaum C."/>
            <person name="Birren B.W."/>
        </authorList>
    </citation>
    <scope>NUCLEOTIDE SEQUENCE [LARGE SCALE GENOMIC DNA]</scope>
    <source>
        <strain>ATCC 24698 / 74-OR23-1A / CBS 708.71 / DSM 1257 / FGSC 987</strain>
    </source>
</reference>
<reference evidence="6" key="2">
    <citation type="journal article" date="2021" name="Proc. Natl. Acad. Sci. U.S.A.">
        <title>Structure of the translating Neurospora ribosome arrested by cycloheximide.</title>
        <authorList>
            <person name="Shen L."/>
            <person name="Su Z."/>
            <person name="Yang K."/>
            <person name="Wu C."/>
            <person name="Becker T."/>
            <person name="Bell-Pedersen D."/>
            <person name="Zhang J."/>
            <person name="Sachs M.S."/>
        </authorList>
    </citation>
    <scope>STRUCTURE BY ELECTRON MICROSCOPY (2.70 ANGSTROMS)</scope>
</reference>